<dbReference type="EC" id="7.1.1.-" evidence="1"/>
<dbReference type="EMBL" id="CP001100">
    <property type="protein sequence ID" value="ACF15014.1"/>
    <property type="molecule type" value="Genomic_DNA"/>
</dbReference>
<dbReference type="RefSeq" id="WP_012501096.1">
    <property type="nucleotide sequence ID" value="NC_011026.1"/>
</dbReference>
<dbReference type="SMR" id="B3QY48"/>
<dbReference type="STRING" id="517418.Ctha_2565"/>
<dbReference type="KEGG" id="cts:Ctha_2565"/>
<dbReference type="eggNOG" id="COG0838">
    <property type="taxonomic scope" value="Bacteria"/>
</dbReference>
<dbReference type="HOGENOM" id="CLU_119549_1_0_10"/>
<dbReference type="OrthoDB" id="9791970at2"/>
<dbReference type="Proteomes" id="UP000001208">
    <property type="component" value="Chromosome"/>
</dbReference>
<dbReference type="GO" id="GO:0030964">
    <property type="term" value="C:NADH dehydrogenase complex"/>
    <property type="evidence" value="ECO:0007669"/>
    <property type="project" value="TreeGrafter"/>
</dbReference>
<dbReference type="GO" id="GO:0005886">
    <property type="term" value="C:plasma membrane"/>
    <property type="evidence" value="ECO:0007669"/>
    <property type="project" value="UniProtKB-SubCell"/>
</dbReference>
<dbReference type="GO" id="GO:0008137">
    <property type="term" value="F:NADH dehydrogenase (ubiquinone) activity"/>
    <property type="evidence" value="ECO:0007669"/>
    <property type="project" value="InterPro"/>
</dbReference>
<dbReference type="GO" id="GO:0050136">
    <property type="term" value="F:NADH:ubiquinone reductase (non-electrogenic) activity"/>
    <property type="evidence" value="ECO:0007669"/>
    <property type="project" value="UniProtKB-UniRule"/>
</dbReference>
<dbReference type="GO" id="GO:0048038">
    <property type="term" value="F:quinone binding"/>
    <property type="evidence" value="ECO:0007669"/>
    <property type="project" value="UniProtKB-KW"/>
</dbReference>
<dbReference type="Gene3D" id="1.20.58.1610">
    <property type="entry name" value="NADH:ubiquinone/plastoquinone oxidoreductase, chain 3"/>
    <property type="match status" value="1"/>
</dbReference>
<dbReference type="HAMAP" id="MF_01394">
    <property type="entry name" value="NDH1_NuoA"/>
    <property type="match status" value="1"/>
</dbReference>
<dbReference type="InterPro" id="IPR023043">
    <property type="entry name" value="NAD(P)H_OxRDtase_bac/plastid"/>
</dbReference>
<dbReference type="InterPro" id="IPR000440">
    <property type="entry name" value="NADH_UbQ/plastoQ_OxRdtase_su3"/>
</dbReference>
<dbReference type="InterPro" id="IPR038430">
    <property type="entry name" value="NDAH_ubi_oxred_su3_sf"/>
</dbReference>
<dbReference type="PANTHER" id="PTHR11058">
    <property type="entry name" value="NADH-UBIQUINONE OXIDOREDUCTASE CHAIN 3"/>
    <property type="match status" value="1"/>
</dbReference>
<dbReference type="PANTHER" id="PTHR11058:SF9">
    <property type="entry name" value="NADH-UBIQUINONE OXIDOREDUCTASE CHAIN 3"/>
    <property type="match status" value="1"/>
</dbReference>
<dbReference type="Pfam" id="PF00507">
    <property type="entry name" value="Oxidored_q4"/>
    <property type="match status" value="1"/>
</dbReference>
<protein>
    <recommendedName>
        <fullName evidence="1">NADH-quinone oxidoreductase subunit A 2</fullName>
        <ecNumber evidence="1">7.1.1.-</ecNumber>
    </recommendedName>
    <alternativeName>
        <fullName evidence="1">NADH dehydrogenase I subunit A 2</fullName>
    </alternativeName>
    <alternativeName>
        <fullName evidence="1">NDH-1 subunit A 2</fullName>
    </alternativeName>
    <alternativeName>
        <fullName evidence="1">NUO1 2</fullName>
    </alternativeName>
</protein>
<name>NUOA2_CHLT3</name>
<comment type="function">
    <text evidence="1">NDH-1 shuttles electrons from NADH, via FMN and iron-sulfur (Fe-S) centers, to quinones in the respiratory chain. The immediate electron acceptor for the enzyme in this species is believed to be a menaquinone. Couples the redox reaction to proton translocation (for every two electrons transferred, four hydrogen ions are translocated across the cytoplasmic membrane), and thus conserves the redox energy in a proton gradient.</text>
</comment>
<comment type="catalytic activity">
    <reaction evidence="1">
        <text>a quinone + NADH + 5 H(+)(in) = a quinol + NAD(+) + 4 H(+)(out)</text>
        <dbReference type="Rhea" id="RHEA:57888"/>
        <dbReference type="ChEBI" id="CHEBI:15378"/>
        <dbReference type="ChEBI" id="CHEBI:24646"/>
        <dbReference type="ChEBI" id="CHEBI:57540"/>
        <dbReference type="ChEBI" id="CHEBI:57945"/>
        <dbReference type="ChEBI" id="CHEBI:132124"/>
    </reaction>
</comment>
<comment type="subunit">
    <text evidence="1">NDH-1 is composed of 14 different subunits. Subunits NuoA, H, J, K, L, M, N constitute the membrane sector of the complex.</text>
</comment>
<comment type="subcellular location">
    <subcellularLocation>
        <location evidence="1">Cell inner membrane</location>
        <topology evidence="1">Multi-pass membrane protein</topology>
    </subcellularLocation>
</comment>
<comment type="similarity">
    <text evidence="1">Belongs to the complex I subunit 3 family.</text>
</comment>
<sequence length="152" mass="17347">MDYTISEFGKVFLFLLFGVVFVIGGYVSSRMLRPHRPNDEKLTSYECGEEAVGSAWVQFNIRFYVVALIFIIFDVEVLFLFPWATVFKQLGGFALFEAVIFVTILTLGLVYAWVKGDLDWVRPTPNVPKMPEKRFDNISSGRSQVVKEESVS</sequence>
<organism>
    <name type="scientific">Chloroherpeton thalassium (strain ATCC 35110 / GB-78)</name>
    <dbReference type="NCBI Taxonomy" id="517418"/>
    <lineage>
        <taxon>Bacteria</taxon>
        <taxon>Pseudomonadati</taxon>
        <taxon>Chlorobiota</taxon>
        <taxon>Chlorobiia</taxon>
        <taxon>Chlorobiales</taxon>
        <taxon>Chloroherpetonaceae</taxon>
        <taxon>Chloroherpeton</taxon>
    </lineage>
</organism>
<feature type="chain" id="PRO_0000362662" description="NADH-quinone oxidoreductase subunit A 2">
    <location>
        <begin position="1"/>
        <end position="152"/>
    </location>
</feature>
<feature type="transmembrane region" description="Helical" evidence="1">
    <location>
        <begin position="8"/>
        <end position="28"/>
    </location>
</feature>
<feature type="transmembrane region" description="Helical" evidence="1">
    <location>
        <begin position="63"/>
        <end position="83"/>
    </location>
</feature>
<feature type="transmembrane region" description="Helical" evidence="1">
    <location>
        <begin position="90"/>
        <end position="110"/>
    </location>
</feature>
<accession>B3QY48</accession>
<gene>
    <name evidence="1" type="primary">nuoA2</name>
    <name type="ordered locus">Ctha_2565</name>
</gene>
<evidence type="ECO:0000255" key="1">
    <source>
        <dbReference type="HAMAP-Rule" id="MF_01394"/>
    </source>
</evidence>
<keyword id="KW-0997">Cell inner membrane</keyword>
<keyword id="KW-1003">Cell membrane</keyword>
<keyword id="KW-0472">Membrane</keyword>
<keyword id="KW-0520">NAD</keyword>
<keyword id="KW-0874">Quinone</keyword>
<keyword id="KW-1185">Reference proteome</keyword>
<keyword id="KW-1278">Translocase</keyword>
<keyword id="KW-0812">Transmembrane</keyword>
<keyword id="KW-1133">Transmembrane helix</keyword>
<keyword id="KW-0813">Transport</keyword>
<proteinExistence type="inferred from homology"/>
<reference key="1">
    <citation type="submission" date="2008-06" db="EMBL/GenBank/DDBJ databases">
        <title>Complete sequence of Chloroherpeton thalassium ATCC 35110.</title>
        <authorList>
            <consortium name="US DOE Joint Genome Institute"/>
            <person name="Lucas S."/>
            <person name="Copeland A."/>
            <person name="Lapidus A."/>
            <person name="Glavina del Rio T."/>
            <person name="Dalin E."/>
            <person name="Tice H."/>
            <person name="Bruce D."/>
            <person name="Goodwin L."/>
            <person name="Pitluck S."/>
            <person name="Schmutz J."/>
            <person name="Larimer F."/>
            <person name="Land M."/>
            <person name="Hauser L."/>
            <person name="Kyrpides N."/>
            <person name="Mikhailova N."/>
            <person name="Liu Z."/>
            <person name="Li T."/>
            <person name="Zhao F."/>
            <person name="Overmann J."/>
            <person name="Bryant D.A."/>
            <person name="Richardson P."/>
        </authorList>
    </citation>
    <scope>NUCLEOTIDE SEQUENCE [LARGE SCALE GENOMIC DNA]</scope>
    <source>
        <strain>ATCC 35110 / GB-78</strain>
    </source>
</reference>